<accession>P20233</accession>
<accession>Q7SYA2</accession>
<protein>
    <recommendedName>
        <fullName>Serotransferrin-A</fullName>
    </recommendedName>
</protein>
<name>TRFEA_XENLA</name>
<sequence>MDLSLRVALCLSMLALCLAIQKEKQVRWCVKSNSELKKCKDLVDTCKNKEIKLSCVEKSNTDECFTAIQEDHADAICVDGGDVYKGSLQPYNLKPIMAENYGSHTETDTCYYAVAVVKKSSKFTFDELKDKKSCHTGIGKTAGWNIIIGLLLEKKLLKWAGPDSETLEKAVSKFFKASCVPGAKEPKLCQLCAGIKEHKCSRSNNEPYYNYAGAFKCLQDDQGDVAFVKQSTVPEEFHKDYELLCPDNTRKSIKEYKNCNLAKVPAHAVLTRVRDDKSKDIIEFLQEAQKTQECKLFSSPYGKDLIFKDSAVSLIPLPSSMDSFLFLGADYSNAIQALKEGVKEDDSAAQVKVRWCTQSKAEKTKCDDWTTISGGAIECTEASTAEECIVQILKGDADAVTLDGGYMYTAGLCGLVPVMGEYYDQDDLTPCQRSSSQAKGVYYAVAIVKKGTQVSWSNLRGVKTCHTAVGRTAGWNIPVGLITSETGNCDFASYVGESCAPGSDVKSNLCALCIGDPEKLSESAKKCSPSASEAYYGYSGAFRCLVEKGQVGFAKHTTVFENTDGKNPAGWAKDLKSEDFELLCPDGSRAPVTDYKKCNLAEVPAHAVVTLPDKREQVAKIVVNQQSLYGRKGFQKDIFQMFQSTGGKDLLFKDSTQCLLEIPSKTTMQEFLGDKYHTAVTSLNKCSTSKSGLLAACTFHSC</sequence>
<dbReference type="EMBL" id="X54530">
    <property type="protein sequence ID" value="CAA38396.1"/>
    <property type="status" value="ALT_FRAME"/>
    <property type="molecule type" value="mRNA"/>
</dbReference>
<dbReference type="EMBL" id="BC054950">
    <property type="protein sequence ID" value="AAH54950.1"/>
    <property type="status" value="ALT_FRAME"/>
    <property type="molecule type" value="mRNA"/>
</dbReference>
<dbReference type="PIR" id="S12100">
    <property type="entry name" value="S12100"/>
</dbReference>
<dbReference type="RefSeq" id="NP_001079812.1">
    <property type="nucleotide sequence ID" value="NM_001086343.1"/>
</dbReference>
<dbReference type="SMR" id="P20233"/>
<dbReference type="MEROPS" id="S60.970"/>
<dbReference type="DNASU" id="379502"/>
<dbReference type="GeneID" id="379502"/>
<dbReference type="KEGG" id="xla:379502"/>
<dbReference type="AGR" id="Xenbase:XB-GENE-6255495"/>
<dbReference type="CTD" id="379502"/>
<dbReference type="Xenbase" id="XB-GENE-6255495">
    <property type="gene designation" value="tf.S"/>
</dbReference>
<dbReference type="OrthoDB" id="9981115at2759"/>
<dbReference type="Proteomes" id="UP000186698">
    <property type="component" value="Chromosome 5S"/>
</dbReference>
<dbReference type="Bgee" id="379502">
    <property type="expression patterns" value="Expressed in liver and 16 other cell types or tissues"/>
</dbReference>
<dbReference type="GO" id="GO:0005769">
    <property type="term" value="C:early endosome"/>
    <property type="evidence" value="ECO:0000318"/>
    <property type="project" value="GO_Central"/>
</dbReference>
<dbReference type="GO" id="GO:0005615">
    <property type="term" value="C:extracellular space"/>
    <property type="evidence" value="ECO:0000318"/>
    <property type="project" value="GO_Central"/>
</dbReference>
<dbReference type="GO" id="GO:0005886">
    <property type="term" value="C:plasma membrane"/>
    <property type="evidence" value="ECO:0000318"/>
    <property type="project" value="GO_Central"/>
</dbReference>
<dbReference type="GO" id="GO:0055037">
    <property type="term" value="C:recycling endosome"/>
    <property type="evidence" value="ECO:0000318"/>
    <property type="project" value="GO_Central"/>
</dbReference>
<dbReference type="GO" id="GO:0046872">
    <property type="term" value="F:metal ion binding"/>
    <property type="evidence" value="ECO:0007669"/>
    <property type="project" value="UniProtKB-KW"/>
</dbReference>
<dbReference type="GO" id="GO:0019731">
    <property type="term" value="P:antibacterial humoral response"/>
    <property type="evidence" value="ECO:0000318"/>
    <property type="project" value="GO_Central"/>
</dbReference>
<dbReference type="GO" id="GO:0006826">
    <property type="term" value="P:iron ion transport"/>
    <property type="evidence" value="ECO:0000318"/>
    <property type="project" value="GO_Central"/>
</dbReference>
<dbReference type="CDD" id="cd13617">
    <property type="entry name" value="PBP2_transferrin_C"/>
    <property type="match status" value="1"/>
</dbReference>
<dbReference type="CDD" id="cd13618">
    <property type="entry name" value="PBP2_transferrin_N"/>
    <property type="match status" value="1"/>
</dbReference>
<dbReference type="FunFam" id="3.40.190.10:FF:000095">
    <property type="entry name" value="Lactotransferrin"/>
    <property type="match status" value="2"/>
</dbReference>
<dbReference type="Gene3D" id="3.40.190.10">
    <property type="entry name" value="Periplasmic binding protein-like II"/>
    <property type="match status" value="4"/>
</dbReference>
<dbReference type="InterPro" id="IPR016357">
    <property type="entry name" value="Transferrin"/>
</dbReference>
<dbReference type="InterPro" id="IPR001156">
    <property type="entry name" value="Transferrin-like_dom"/>
</dbReference>
<dbReference type="InterPro" id="IPR018195">
    <property type="entry name" value="Transferrin_Fe_BS"/>
</dbReference>
<dbReference type="PANTHER" id="PTHR11485:SF31">
    <property type="entry name" value="SEROTRANSFERRIN"/>
    <property type="match status" value="1"/>
</dbReference>
<dbReference type="PANTHER" id="PTHR11485">
    <property type="entry name" value="TRANSFERRIN"/>
    <property type="match status" value="1"/>
</dbReference>
<dbReference type="Pfam" id="PF00405">
    <property type="entry name" value="Transferrin"/>
    <property type="match status" value="2"/>
</dbReference>
<dbReference type="PIRSF" id="PIRSF002549">
    <property type="entry name" value="Transferrin"/>
    <property type="match status" value="1"/>
</dbReference>
<dbReference type="PRINTS" id="PR00422">
    <property type="entry name" value="TRANSFERRIN"/>
</dbReference>
<dbReference type="SMART" id="SM00094">
    <property type="entry name" value="TR_FER"/>
    <property type="match status" value="2"/>
</dbReference>
<dbReference type="SUPFAM" id="SSF53850">
    <property type="entry name" value="Periplasmic binding protein-like II"/>
    <property type="match status" value="2"/>
</dbReference>
<dbReference type="PROSITE" id="PS00205">
    <property type="entry name" value="TRANSFERRIN_LIKE_1"/>
    <property type="match status" value="2"/>
</dbReference>
<dbReference type="PROSITE" id="PS00206">
    <property type="entry name" value="TRANSFERRIN_LIKE_2"/>
    <property type="match status" value="2"/>
</dbReference>
<dbReference type="PROSITE" id="PS00207">
    <property type="entry name" value="TRANSFERRIN_LIKE_3"/>
    <property type="match status" value="2"/>
</dbReference>
<dbReference type="PROSITE" id="PS51408">
    <property type="entry name" value="TRANSFERRIN_LIKE_4"/>
    <property type="match status" value="2"/>
</dbReference>
<organism>
    <name type="scientific">Xenopus laevis</name>
    <name type="common">African clawed frog</name>
    <dbReference type="NCBI Taxonomy" id="8355"/>
    <lineage>
        <taxon>Eukaryota</taxon>
        <taxon>Metazoa</taxon>
        <taxon>Chordata</taxon>
        <taxon>Craniata</taxon>
        <taxon>Vertebrata</taxon>
        <taxon>Euteleostomi</taxon>
        <taxon>Amphibia</taxon>
        <taxon>Batrachia</taxon>
        <taxon>Anura</taxon>
        <taxon>Pipoidea</taxon>
        <taxon>Pipidae</taxon>
        <taxon>Xenopodinae</taxon>
        <taxon>Xenopus</taxon>
        <taxon>Xenopus</taxon>
    </lineage>
</organism>
<gene>
    <name type="primary">tf-a</name>
    <name type="synonym">tf</name>
</gene>
<comment type="function">
    <text evidence="1">Transferrins are iron binding transport proteins which can bind two Fe(3+) ions in association with the binding of an anion, usually bicarbonate. It is responsible for the transport of iron from sites of absorption and heme degradation to those of storage and utilization. Serum transferrin may also have a further role in stimulating cell proliferation (By similarity).</text>
</comment>
<comment type="subunit">
    <text evidence="1">Monomer.</text>
</comment>
<comment type="subcellular location">
    <subcellularLocation>
        <location evidence="1">Secreted</location>
    </subcellularLocation>
</comment>
<comment type="tissue specificity">
    <text>Plasma.</text>
</comment>
<comment type="similarity">
    <text evidence="3">Belongs to the transferrin family.</text>
</comment>
<comment type="sequence caution" evidence="4">
    <conflict type="frameshift">
        <sequence resource="EMBL-CDS" id="AAH54950"/>
    </conflict>
</comment>
<comment type="sequence caution" evidence="4">
    <conflict type="frameshift">
        <sequence resource="EMBL-CDS" id="CAA38396"/>
    </conflict>
</comment>
<keyword id="KW-1015">Disulfide bond</keyword>
<keyword id="KW-0406">Ion transport</keyword>
<keyword id="KW-0408">Iron</keyword>
<keyword id="KW-0410">Iron transport</keyword>
<keyword id="KW-0479">Metal-binding</keyword>
<keyword id="KW-1185">Reference proteome</keyword>
<keyword id="KW-0677">Repeat</keyword>
<keyword id="KW-0964">Secreted</keyword>
<keyword id="KW-0732">Signal</keyword>
<keyword id="KW-0813">Transport</keyword>
<proteinExistence type="evidence at transcript level"/>
<reference key="1">
    <citation type="journal article" date="1990" name="Nucleic Acids Res.">
        <title>The nucleotide sequence of Xenopus laevis transferrin mRNA.</title>
        <authorList>
            <person name="Moskaitis J.E."/>
            <person name="Pastori R.L."/>
            <person name="Schoenberg D.R."/>
        </authorList>
    </citation>
    <scope>NUCLEOTIDE SEQUENCE [MRNA]</scope>
    <source>
        <tissue>Liver</tissue>
    </source>
</reference>
<reference key="2">
    <citation type="submission" date="2003-07" db="EMBL/GenBank/DDBJ databases">
        <authorList>
            <consortium name="NIH - Xenopus Gene Collection (XGC) project"/>
        </authorList>
    </citation>
    <scope>NUCLEOTIDE SEQUENCE [LARGE SCALE MRNA]</scope>
    <source>
        <tissue>Tadpole</tissue>
    </source>
</reference>
<feature type="signal peptide" evidence="2">
    <location>
        <begin position="1"/>
        <end position="19"/>
    </location>
</feature>
<feature type="chain" id="PRO_0000035720" description="Serotransferrin-A">
    <location>
        <begin position="20"/>
        <end position="702"/>
    </location>
</feature>
<feature type="domain" description="Transferrin-like 1" evidence="3">
    <location>
        <begin position="26"/>
        <end position="340"/>
    </location>
</feature>
<feature type="domain" description="Transferrin-like 2" evidence="3">
    <location>
        <begin position="353"/>
        <end position="685"/>
    </location>
</feature>
<feature type="region of interest" description="Connecting region">
    <location>
        <begin position="340"/>
        <end position="349"/>
    </location>
</feature>
<feature type="binding site" evidence="3">
    <location>
        <position position="79"/>
    </location>
    <ligand>
        <name>Fe(3+)</name>
        <dbReference type="ChEBI" id="CHEBI:29034"/>
        <label>1</label>
    </ligand>
</feature>
<feature type="binding site" evidence="3">
    <location>
        <position position="111"/>
    </location>
    <ligand>
        <name>Fe(3+)</name>
        <dbReference type="ChEBI" id="CHEBI:29034"/>
        <label>1</label>
    </ligand>
</feature>
<feature type="binding site" evidence="3">
    <location>
        <position position="136"/>
    </location>
    <ligand>
        <name>hydrogencarbonate</name>
        <dbReference type="ChEBI" id="CHEBI:17544"/>
        <label>1</label>
    </ligand>
</feature>
<feature type="binding site" evidence="3">
    <location>
        <position position="140"/>
    </location>
    <ligand>
        <name>hydrogencarbonate</name>
        <dbReference type="ChEBI" id="CHEBI:17544"/>
        <label>1</label>
    </ligand>
</feature>
<feature type="binding site" evidence="3">
    <location>
        <position position="142"/>
    </location>
    <ligand>
        <name>hydrogencarbonate</name>
        <dbReference type="ChEBI" id="CHEBI:17544"/>
        <label>1</label>
    </ligand>
</feature>
<feature type="binding site" evidence="3">
    <location>
        <position position="143"/>
    </location>
    <ligand>
        <name>hydrogencarbonate</name>
        <dbReference type="ChEBI" id="CHEBI:17544"/>
        <label>1</label>
    </ligand>
</feature>
<feature type="binding site" evidence="3">
    <location>
        <position position="211"/>
    </location>
    <ligand>
        <name>Fe(3+)</name>
        <dbReference type="ChEBI" id="CHEBI:29034"/>
        <label>1</label>
    </ligand>
</feature>
<feature type="binding site" evidence="3">
    <location>
        <position position="267"/>
    </location>
    <ligand>
        <name>Fe(3+)</name>
        <dbReference type="ChEBI" id="CHEBI:29034"/>
        <label>1</label>
    </ligand>
</feature>
<feature type="binding site" evidence="3">
    <location>
        <position position="403"/>
    </location>
    <ligand>
        <name>Fe(3+)</name>
        <dbReference type="ChEBI" id="CHEBI:29034"/>
        <label>2</label>
    </ligand>
</feature>
<feature type="binding site" evidence="3">
    <location>
        <position position="442"/>
    </location>
    <ligand>
        <name>Fe(3+)</name>
        <dbReference type="ChEBI" id="CHEBI:29034"/>
        <label>2</label>
    </ligand>
</feature>
<feature type="binding site" evidence="3">
    <location>
        <position position="467"/>
    </location>
    <ligand>
        <name>hydrogencarbonate</name>
        <dbReference type="ChEBI" id="CHEBI:17544"/>
        <label>2</label>
    </ligand>
</feature>
<feature type="binding site" evidence="3">
    <location>
        <position position="471"/>
    </location>
    <ligand>
        <name>hydrogencarbonate</name>
        <dbReference type="ChEBI" id="CHEBI:17544"/>
        <label>2</label>
    </ligand>
</feature>
<feature type="binding site" evidence="3">
    <location>
        <position position="473"/>
    </location>
    <ligand>
        <name>hydrogencarbonate</name>
        <dbReference type="ChEBI" id="CHEBI:17544"/>
        <label>2</label>
    </ligand>
</feature>
<feature type="binding site" evidence="3">
    <location>
        <position position="474"/>
    </location>
    <ligand>
        <name>hydrogencarbonate</name>
        <dbReference type="ChEBI" id="CHEBI:17544"/>
        <label>2</label>
    </ligand>
</feature>
<feature type="binding site" evidence="3">
    <location>
        <position position="538"/>
    </location>
    <ligand>
        <name>Fe(3+)</name>
        <dbReference type="ChEBI" id="CHEBI:29034"/>
        <label>2</label>
    </ligand>
</feature>
<feature type="binding site" evidence="3">
    <location>
        <position position="606"/>
    </location>
    <ligand>
        <name>Fe(3+)</name>
        <dbReference type="ChEBI" id="CHEBI:29034"/>
        <label>2</label>
    </ligand>
</feature>
<feature type="disulfide bond" evidence="3">
    <location>
        <begin position="29"/>
        <end position="64"/>
    </location>
</feature>
<feature type="disulfide bond" evidence="3">
    <location>
        <begin position="39"/>
        <end position="55"/>
    </location>
</feature>
<feature type="disulfide bond" evidence="3">
    <location>
        <begin position="134"/>
        <end position="217"/>
    </location>
</feature>
<feature type="disulfide bond" evidence="3">
    <location>
        <begin position="179"/>
        <end position="192"/>
    </location>
</feature>
<feature type="disulfide bond" evidence="3">
    <location>
        <begin position="245"/>
        <end position="259"/>
    </location>
</feature>
<feature type="disulfide bond" evidence="3">
    <location>
        <begin position="356"/>
        <end position="388"/>
    </location>
</feature>
<feature type="disulfide bond" evidence="3">
    <location>
        <begin position="366"/>
        <end position="379"/>
    </location>
</feature>
<feature type="disulfide bond" evidence="3">
    <location>
        <begin position="413"/>
        <end position="697"/>
    </location>
</feature>
<feature type="disulfide bond" evidence="3">
    <location>
        <begin position="431"/>
        <end position="658"/>
    </location>
</feature>
<feature type="disulfide bond" evidence="3">
    <location>
        <begin position="465"/>
        <end position="544"/>
    </location>
</feature>
<feature type="disulfide bond" evidence="3">
    <location>
        <begin position="489"/>
        <end position="686"/>
    </location>
</feature>
<feature type="disulfide bond" evidence="3">
    <location>
        <begin position="499"/>
        <end position="513"/>
    </location>
</feature>
<feature type="disulfide bond" evidence="3">
    <location>
        <begin position="510"/>
        <end position="527"/>
    </location>
</feature>
<feature type="disulfide bond" evidence="3">
    <location>
        <begin position="584"/>
        <end position="598"/>
    </location>
</feature>
<feature type="sequence conflict" description="In Ref. 1; CAA38396." evidence="4" ref="1">
    <original>L</original>
    <variation>F</variation>
    <location>
        <position position="3"/>
    </location>
</feature>
<feature type="sequence conflict" description="In Ref. 1; CAA38396." evidence="4" ref="1">
    <original>K</original>
    <variation>R</variation>
    <location>
        <position position="154"/>
    </location>
</feature>
<feature type="sequence conflict" description="In Ref. 1; CAA38396." evidence="4" ref="1">
    <original>LEK</original>
    <variation>WRN</variation>
    <location>
        <begin position="167"/>
        <end position="169"/>
    </location>
</feature>
<feature type="sequence conflict" description="In Ref. 1; CAA38396." evidence="4" ref="1">
    <original>C</original>
    <variation>S</variation>
    <location>
        <position position="189"/>
    </location>
</feature>
<feature type="sequence conflict" description="In Ref. 1; CAA38396." evidence="4" ref="1">
    <original>V</original>
    <variation>G</variation>
    <location>
        <position position="273"/>
    </location>
</feature>
<feature type="sequence conflict" description="In Ref. 1; CAA38396." evidence="4" ref="1">
    <original>YGK</original>
    <variation>VWGR</variation>
    <location>
        <begin position="301"/>
        <end position="303"/>
    </location>
</feature>
<feature type="sequence conflict" description="In Ref. 1; CAA38396." evidence="4" ref="1">
    <original>S</original>
    <variation>C</variation>
    <location>
        <position position="435"/>
    </location>
</feature>
<feature type="sequence conflict" description="In Ref. 1; CAA38396." evidence="4" ref="1">
    <original>G</original>
    <variation>A</variation>
    <location>
        <position position="487"/>
    </location>
</feature>
<feature type="sequence conflict" description="In Ref. 1; CAA38396." evidence="4" ref="1">
    <original>SA</original>
    <variation>RE</variation>
    <location>
        <begin position="523"/>
        <end position="524"/>
    </location>
</feature>
<feature type="sequence conflict" description="In Ref. 1; CAA38396." evidence="4" ref="1">
    <original>K</original>
    <variation>R</variation>
    <location>
        <position position="597"/>
    </location>
</feature>
<evidence type="ECO:0000250" key="1"/>
<evidence type="ECO:0000255" key="2"/>
<evidence type="ECO:0000255" key="3">
    <source>
        <dbReference type="PROSITE-ProRule" id="PRU00741"/>
    </source>
</evidence>
<evidence type="ECO:0000305" key="4"/>